<name>ARGP_PECAS</name>
<sequence length="297" mass="33488">MKRPDYRTLQALDAVIRERGFERAAQKLCITQSAVSQRIKQLENLFGQPLLVRTIPPRPTEQGQKLLALLHQVELLEEEWLGNETNSDIPLLLSLAVNADSLATWLLPALQSVLVDSPIRLNLQVEDETRTQERLRRGEVVGAVSIQSQPLPSCLVDKLGALDYLFVASPTFAARYFPNGVTRSALLRAPAVAFDHLDDMHQAFLQQNFDLSPGSVPCHIVNSSEAFVQLARQGTTCCMIPHLQIERELANNELVDLTPGLFQRRMLYWHRFAPESRMMRKVTDALLSHGHQVLRQS</sequence>
<reference key="1">
    <citation type="journal article" date="2004" name="Proc. Natl. Acad. Sci. U.S.A.">
        <title>Genome sequence of the enterobacterial phytopathogen Erwinia carotovora subsp. atroseptica and characterization of virulence factors.</title>
        <authorList>
            <person name="Bell K.S."/>
            <person name="Sebaihia M."/>
            <person name="Pritchard L."/>
            <person name="Holden M.T.G."/>
            <person name="Hyman L.J."/>
            <person name="Holeva M.C."/>
            <person name="Thomson N.R."/>
            <person name="Bentley S.D."/>
            <person name="Churcher L.J.C."/>
            <person name="Mungall K."/>
            <person name="Atkin R."/>
            <person name="Bason N."/>
            <person name="Brooks K."/>
            <person name="Chillingworth T."/>
            <person name="Clark K."/>
            <person name="Doggett J."/>
            <person name="Fraser A."/>
            <person name="Hance Z."/>
            <person name="Hauser H."/>
            <person name="Jagels K."/>
            <person name="Moule S."/>
            <person name="Norbertczak H."/>
            <person name="Ormond D."/>
            <person name="Price C."/>
            <person name="Quail M.A."/>
            <person name="Sanders M."/>
            <person name="Walker D."/>
            <person name="Whitehead S."/>
            <person name="Salmond G.P.C."/>
            <person name="Birch P.R.J."/>
            <person name="Parkhill J."/>
            <person name="Toth I.K."/>
        </authorList>
    </citation>
    <scope>NUCLEOTIDE SEQUENCE [LARGE SCALE GENOMIC DNA]</scope>
    <source>
        <strain>SCRI 1043 / ATCC BAA-672</strain>
    </source>
</reference>
<comment type="function">
    <text evidence="1">Controls the transcription of genes involved in arginine and lysine metabolism.</text>
</comment>
<comment type="subunit">
    <text evidence="1">Homodimer.</text>
</comment>
<comment type="similarity">
    <text evidence="2">Belongs to the LysR transcriptional regulatory family.</text>
</comment>
<accession>Q6D092</accession>
<protein>
    <recommendedName>
        <fullName evidence="1">HTH-type transcriptional regulator ArgP</fullName>
    </recommendedName>
</protein>
<gene>
    <name evidence="1" type="primary">argP</name>
    <name type="synonym">iciA</name>
    <name type="ordered locus">ECA3907</name>
</gene>
<feature type="chain" id="PRO_0000258605" description="HTH-type transcriptional regulator ArgP">
    <location>
        <begin position="1"/>
        <end position="297"/>
    </location>
</feature>
<feature type="domain" description="HTH lysR-type" evidence="1">
    <location>
        <begin position="4"/>
        <end position="60"/>
    </location>
</feature>
<feature type="DNA-binding region" description="H-T-H motif" evidence="1">
    <location>
        <begin position="21"/>
        <end position="40"/>
    </location>
</feature>
<dbReference type="EMBL" id="BX950851">
    <property type="protein sequence ID" value="CAG76805.1"/>
    <property type="molecule type" value="Genomic_DNA"/>
</dbReference>
<dbReference type="RefSeq" id="WP_011095404.1">
    <property type="nucleotide sequence ID" value="NC_004547.2"/>
</dbReference>
<dbReference type="SMR" id="Q6D092"/>
<dbReference type="STRING" id="218491.ECA3907"/>
<dbReference type="KEGG" id="eca:ECA3907"/>
<dbReference type="PATRIC" id="fig|218491.5.peg.3970"/>
<dbReference type="eggNOG" id="COG0583">
    <property type="taxonomic scope" value="Bacteria"/>
</dbReference>
<dbReference type="HOGENOM" id="CLU_063829_0_0_6"/>
<dbReference type="OrthoDB" id="3252676at2"/>
<dbReference type="Proteomes" id="UP000007966">
    <property type="component" value="Chromosome"/>
</dbReference>
<dbReference type="GO" id="GO:0003677">
    <property type="term" value="F:DNA binding"/>
    <property type="evidence" value="ECO:0007669"/>
    <property type="project" value="UniProtKB-UniRule"/>
</dbReference>
<dbReference type="GO" id="GO:0003700">
    <property type="term" value="F:DNA-binding transcription factor activity"/>
    <property type="evidence" value="ECO:0007669"/>
    <property type="project" value="UniProtKB-UniRule"/>
</dbReference>
<dbReference type="CDD" id="cd08428">
    <property type="entry name" value="PBP2_IciA_ArgP"/>
    <property type="match status" value="1"/>
</dbReference>
<dbReference type="FunFam" id="1.10.10.10:FF:000061">
    <property type="entry name" value="HTH-type transcriptional regulator ArgP"/>
    <property type="match status" value="1"/>
</dbReference>
<dbReference type="Gene3D" id="3.40.190.290">
    <property type="match status" value="1"/>
</dbReference>
<dbReference type="Gene3D" id="1.10.10.10">
    <property type="entry name" value="Winged helix-like DNA-binding domain superfamily/Winged helix DNA-binding domain"/>
    <property type="match status" value="1"/>
</dbReference>
<dbReference type="HAMAP" id="MF_00513">
    <property type="entry name" value="HTH_type_ArgP"/>
    <property type="match status" value="1"/>
</dbReference>
<dbReference type="InterPro" id="IPR017685">
    <property type="entry name" value="ArgP"/>
</dbReference>
<dbReference type="InterPro" id="IPR023490">
    <property type="entry name" value="ArgP_gammaproteobact"/>
</dbReference>
<dbReference type="InterPro" id="IPR050176">
    <property type="entry name" value="LTTR"/>
</dbReference>
<dbReference type="InterPro" id="IPR005119">
    <property type="entry name" value="LysR_subst-bd"/>
</dbReference>
<dbReference type="InterPro" id="IPR000847">
    <property type="entry name" value="Tscrpt_reg_HTH_LysR"/>
</dbReference>
<dbReference type="InterPro" id="IPR036388">
    <property type="entry name" value="WH-like_DNA-bd_sf"/>
</dbReference>
<dbReference type="InterPro" id="IPR036390">
    <property type="entry name" value="WH_DNA-bd_sf"/>
</dbReference>
<dbReference type="NCBIfam" id="TIGR03298">
    <property type="entry name" value="argP"/>
    <property type="match status" value="1"/>
</dbReference>
<dbReference type="NCBIfam" id="NF002964">
    <property type="entry name" value="PRK03635.1"/>
    <property type="match status" value="1"/>
</dbReference>
<dbReference type="NCBIfam" id="NF009888">
    <property type="entry name" value="PRK13348.1"/>
    <property type="match status" value="1"/>
</dbReference>
<dbReference type="PANTHER" id="PTHR30579:SF2">
    <property type="entry name" value="HTH-TYPE TRANSCRIPTIONAL REGULATOR ARGP"/>
    <property type="match status" value="1"/>
</dbReference>
<dbReference type="PANTHER" id="PTHR30579">
    <property type="entry name" value="TRANSCRIPTIONAL REGULATOR"/>
    <property type="match status" value="1"/>
</dbReference>
<dbReference type="Pfam" id="PF00126">
    <property type="entry name" value="HTH_1"/>
    <property type="match status" value="1"/>
</dbReference>
<dbReference type="Pfam" id="PF03466">
    <property type="entry name" value="LysR_substrate"/>
    <property type="match status" value="1"/>
</dbReference>
<dbReference type="PRINTS" id="PR00039">
    <property type="entry name" value="HTHLYSR"/>
</dbReference>
<dbReference type="SUPFAM" id="SSF53850">
    <property type="entry name" value="Periplasmic binding protein-like II"/>
    <property type="match status" value="1"/>
</dbReference>
<dbReference type="SUPFAM" id="SSF46785">
    <property type="entry name" value="Winged helix' DNA-binding domain"/>
    <property type="match status" value="1"/>
</dbReference>
<dbReference type="PROSITE" id="PS50931">
    <property type="entry name" value="HTH_LYSR"/>
    <property type="match status" value="1"/>
</dbReference>
<evidence type="ECO:0000255" key="1">
    <source>
        <dbReference type="HAMAP-Rule" id="MF_00513"/>
    </source>
</evidence>
<evidence type="ECO:0000305" key="2"/>
<organism>
    <name type="scientific">Pectobacterium atrosepticum (strain SCRI 1043 / ATCC BAA-672)</name>
    <name type="common">Erwinia carotovora subsp. atroseptica</name>
    <dbReference type="NCBI Taxonomy" id="218491"/>
    <lineage>
        <taxon>Bacteria</taxon>
        <taxon>Pseudomonadati</taxon>
        <taxon>Pseudomonadota</taxon>
        <taxon>Gammaproteobacteria</taxon>
        <taxon>Enterobacterales</taxon>
        <taxon>Pectobacteriaceae</taxon>
        <taxon>Pectobacterium</taxon>
    </lineage>
</organism>
<proteinExistence type="inferred from homology"/>
<keyword id="KW-0238">DNA-binding</keyword>
<keyword id="KW-1185">Reference proteome</keyword>
<keyword id="KW-0804">Transcription</keyword>
<keyword id="KW-0805">Transcription regulation</keyword>